<dbReference type="EC" id="5.3.1.1"/>
<dbReference type="EMBL" id="CR382132">
    <property type="protein sequence ID" value="CAG77830.1"/>
    <property type="molecule type" value="Genomic_DNA"/>
</dbReference>
<dbReference type="RefSeq" id="XP_505023.1">
    <property type="nucleotide sequence ID" value="XM_505023.1"/>
</dbReference>
<dbReference type="SMR" id="Q6C2T9"/>
<dbReference type="FunCoup" id="Q6C2T9">
    <property type="interactions" value="726"/>
</dbReference>
<dbReference type="STRING" id="284591.Q6C2T9"/>
<dbReference type="EnsemblFungi" id="CAG77830">
    <property type="protein sequence ID" value="CAG77830"/>
    <property type="gene ID" value="YALI0_F05214g"/>
</dbReference>
<dbReference type="KEGG" id="yli:2908163"/>
<dbReference type="VEuPathDB" id="FungiDB:YALI0_F05214g"/>
<dbReference type="HOGENOM" id="CLU_024251_2_0_1"/>
<dbReference type="InParanoid" id="Q6C2T9"/>
<dbReference type="OMA" id="NWKMHMT"/>
<dbReference type="OrthoDB" id="104733at4891"/>
<dbReference type="UniPathway" id="UPA00109">
    <property type="reaction ID" value="UER00189"/>
</dbReference>
<dbReference type="UniPathway" id="UPA00138"/>
<dbReference type="Proteomes" id="UP000001300">
    <property type="component" value="Chromosome F"/>
</dbReference>
<dbReference type="GO" id="GO:0005829">
    <property type="term" value="C:cytosol"/>
    <property type="evidence" value="ECO:0000318"/>
    <property type="project" value="GO_Central"/>
</dbReference>
<dbReference type="GO" id="GO:0004807">
    <property type="term" value="F:triose-phosphate isomerase activity"/>
    <property type="evidence" value="ECO:0000318"/>
    <property type="project" value="GO_Central"/>
</dbReference>
<dbReference type="GO" id="GO:0061621">
    <property type="term" value="P:canonical glycolysis"/>
    <property type="evidence" value="ECO:0007669"/>
    <property type="project" value="EnsemblFungi"/>
</dbReference>
<dbReference type="GO" id="GO:0006094">
    <property type="term" value="P:gluconeogenesis"/>
    <property type="evidence" value="ECO:0000318"/>
    <property type="project" value="GO_Central"/>
</dbReference>
<dbReference type="GO" id="GO:0046166">
    <property type="term" value="P:glyceraldehyde-3-phosphate biosynthetic process"/>
    <property type="evidence" value="ECO:0000318"/>
    <property type="project" value="GO_Central"/>
</dbReference>
<dbReference type="GO" id="GO:0019563">
    <property type="term" value="P:glycerol catabolic process"/>
    <property type="evidence" value="ECO:0000318"/>
    <property type="project" value="GO_Central"/>
</dbReference>
<dbReference type="GO" id="GO:0006096">
    <property type="term" value="P:glycolytic process"/>
    <property type="evidence" value="ECO:0000318"/>
    <property type="project" value="GO_Central"/>
</dbReference>
<dbReference type="CDD" id="cd00311">
    <property type="entry name" value="TIM"/>
    <property type="match status" value="1"/>
</dbReference>
<dbReference type="FunFam" id="3.20.20.70:FF:000025">
    <property type="entry name" value="Triosephosphate isomerase"/>
    <property type="match status" value="1"/>
</dbReference>
<dbReference type="Gene3D" id="3.20.20.70">
    <property type="entry name" value="Aldolase class I"/>
    <property type="match status" value="1"/>
</dbReference>
<dbReference type="HAMAP" id="MF_00147_B">
    <property type="entry name" value="TIM_B"/>
    <property type="match status" value="1"/>
</dbReference>
<dbReference type="InterPro" id="IPR013785">
    <property type="entry name" value="Aldolase_TIM"/>
</dbReference>
<dbReference type="InterPro" id="IPR035990">
    <property type="entry name" value="TIM_sf"/>
</dbReference>
<dbReference type="InterPro" id="IPR022896">
    <property type="entry name" value="TrioseP_Isoase_bac/euk"/>
</dbReference>
<dbReference type="InterPro" id="IPR000652">
    <property type="entry name" value="Triosephosphate_isomerase"/>
</dbReference>
<dbReference type="InterPro" id="IPR020861">
    <property type="entry name" value="Triosephosphate_isomerase_AS"/>
</dbReference>
<dbReference type="NCBIfam" id="TIGR00419">
    <property type="entry name" value="tim"/>
    <property type="match status" value="1"/>
</dbReference>
<dbReference type="PANTHER" id="PTHR21139">
    <property type="entry name" value="TRIOSEPHOSPHATE ISOMERASE"/>
    <property type="match status" value="1"/>
</dbReference>
<dbReference type="PANTHER" id="PTHR21139:SF41">
    <property type="entry name" value="TRIOSEPHOSPHATE ISOMERASE"/>
    <property type="match status" value="1"/>
</dbReference>
<dbReference type="Pfam" id="PF00121">
    <property type="entry name" value="TIM"/>
    <property type="match status" value="1"/>
</dbReference>
<dbReference type="SUPFAM" id="SSF51351">
    <property type="entry name" value="Triosephosphate isomerase (TIM)"/>
    <property type="match status" value="1"/>
</dbReference>
<dbReference type="PROSITE" id="PS00171">
    <property type="entry name" value="TIM_1"/>
    <property type="match status" value="1"/>
</dbReference>
<dbReference type="PROSITE" id="PS51440">
    <property type="entry name" value="TIM_2"/>
    <property type="match status" value="1"/>
</dbReference>
<gene>
    <name type="primary">TPI1</name>
    <name type="ordered locus">YALI0F05214g</name>
</gene>
<protein>
    <recommendedName>
        <fullName>Triosephosphate isomerase</fullName>
        <shortName>TIM</shortName>
        <ecNumber>5.3.1.1</ecNumber>
    </recommendedName>
    <alternativeName>
        <fullName>Triose-phosphate isomerase</fullName>
    </alternativeName>
</protein>
<proteinExistence type="inferred from homology"/>
<feature type="chain" id="PRO_0000090168" description="Triosephosphate isomerase">
    <location>
        <begin position="1"/>
        <end position="247"/>
    </location>
</feature>
<feature type="active site" description="Electrophile" evidence="1">
    <location>
        <position position="95"/>
    </location>
</feature>
<feature type="active site" description="Proton acceptor" evidence="1">
    <location>
        <position position="165"/>
    </location>
</feature>
<feature type="binding site" evidence="1">
    <location>
        <position position="10"/>
    </location>
    <ligand>
        <name>substrate</name>
    </ligand>
</feature>
<feature type="binding site" evidence="1">
    <location>
        <position position="12"/>
    </location>
    <ligand>
        <name>substrate</name>
    </ligand>
</feature>
<name>TPIS_YARLI</name>
<organism>
    <name type="scientific">Yarrowia lipolytica (strain CLIB 122 / E 150)</name>
    <name type="common">Yeast</name>
    <name type="synonym">Candida lipolytica</name>
    <dbReference type="NCBI Taxonomy" id="284591"/>
    <lineage>
        <taxon>Eukaryota</taxon>
        <taxon>Fungi</taxon>
        <taxon>Dikarya</taxon>
        <taxon>Ascomycota</taxon>
        <taxon>Saccharomycotina</taxon>
        <taxon>Dipodascomycetes</taxon>
        <taxon>Dipodascales</taxon>
        <taxon>Dipodascales incertae sedis</taxon>
        <taxon>Yarrowia</taxon>
    </lineage>
</organism>
<reference key="1">
    <citation type="journal article" date="2004" name="Nature">
        <title>Genome evolution in yeasts.</title>
        <authorList>
            <person name="Dujon B."/>
            <person name="Sherman D."/>
            <person name="Fischer G."/>
            <person name="Durrens P."/>
            <person name="Casaregola S."/>
            <person name="Lafontaine I."/>
            <person name="de Montigny J."/>
            <person name="Marck C."/>
            <person name="Neuveglise C."/>
            <person name="Talla E."/>
            <person name="Goffard N."/>
            <person name="Frangeul L."/>
            <person name="Aigle M."/>
            <person name="Anthouard V."/>
            <person name="Babour A."/>
            <person name="Barbe V."/>
            <person name="Barnay S."/>
            <person name="Blanchin S."/>
            <person name="Beckerich J.-M."/>
            <person name="Beyne E."/>
            <person name="Bleykasten C."/>
            <person name="Boisrame A."/>
            <person name="Boyer J."/>
            <person name="Cattolico L."/>
            <person name="Confanioleri F."/>
            <person name="de Daruvar A."/>
            <person name="Despons L."/>
            <person name="Fabre E."/>
            <person name="Fairhead C."/>
            <person name="Ferry-Dumazet H."/>
            <person name="Groppi A."/>
            <person name="Hantraye F."/>
            <person name="Hennequin C."/>
            <person name="Jauniaux N."/>
            <person name="Joyet P."/>
            <person name="Kachouri R."/>
            <person name="Kerrest A."/>
            <person name="Koszul R."/>
            <person name="Lemaire M."/>
            <person name="Lesur I."/>
            <person name="Ma L."/>
            <person name="Muller H."/>
            <person name="Nicaud J.-M."/>
            <person name="Nikolski M."/>
            <person name="Oztas S."/>
            <person name="Ozier-Kalogeropoulos O."/>
            <person name="Pellenz S."/>
            <person name="Potier S."/>
            <person name="Richard G.-F."/>
            <person name="Straub M.-L."/>
            <person name="Suleau A."/>
            <person name="Swennen D."/>
            <person name="Tekaia F."/>
            <person name="Wesolowski-Louvel M."/>
            <person name="Westhof E."/>
            <person name="Wirth B."/>
            <person name="Zeniou-Meyer M."/>
            <person name="Zivanovic Y."/>
            <person name="Bolotin-Fukuhara M."/>
            <person name="Thierry A."/>
            <person name="Bouchier C."/>
            <person name="Caudron B."/>
            <person name="Scarpelli C."/>
            <person name="Gaillardin C."/>
            <person name="Weissenbach J."/>
            <person name="Wincker P."/>
            <person name="Souciet J.-L."/>
        </authorList>
    </citation>
    <scope>NUCLEOTIDE SEQUENCE [LARGE SCALE GENOMIC DNA]</scope>
    <source>
        <strain>CLIB 122 / E 150</strain>
    </source>
</reference>
<comment type="catalytic activity">
    <reaction>
        <text>D-glyceraldehyde 3-phosphate = dihydroxyacetone phosphate</text>
        <dbReference type="Rhea" id="RHEA:18585"/>
        <dbReference type="ChEBI" id="CHEBI:57642"/>
        <dbReference type="ChEBI" id="CHEBI:59776"/>
        <dbReference type="EC" id="5.3.1.1"/>
    </reaction>
</comment>
<comment type="pathway">
    <text>Carbohydrate biosynthesis; gluconeogenesis.</text>
</comment>
<comment type="pathway">
    <text>Carbohydrate degradation; glycolysis; D-glyceraldehyde 3-phosphate from glycerone phosphate: step 1/1.</text>
</comment>
<comment type="subunit">
    <text evidence="1">Homodimer.</text>
</comment>
<comment type="similarity">
    <text evidence="2">Belongs to the triosephosphate isomerase family.</text>
</comment>
<keyword id="KW-0312">Gluconeogenesis</keyword>
<keyword id="KW-0324">Glycolysis</keyword>
<keyword id="KW-0413">Isomerase</keyword>
<keyword id="KW-1185">Reference proteome</keyword>
<evidence type="ECO:0000250" key="1"/>
<evidence type="ECO:0000305" key="2"/>
<accession>Q6C2T9</accession>
<sequence length="247" mass="26810">MSRTFFVGGNFKMNGSLESIKAIVERLNASELDPKTEVVISPPFPYLLLAKESLKKPTVSVAGQNSFDKGDGAFTGEVSVAQLKDVGAKWVILGHSERRTINKESSEWIADKTKYALDNGLDVILCIGETIDEKKAGKTLDVVRSQLDPVIAKIKDWSNVVIAYEPVWAIGTGLAATAEDAQQIHHEIRAYLKDKIGAQADKVRIIYGGSVNGKNSGTFKDKSDVDGFLVGGASLKPEFVDIINSRL</sequence>